<organism>
    <name type="scientific">Giardia intestinalis</name>
    <name type="common">Giardia lamblia</name>
    <dbReference type="NCBI Taxonomy" id="5741"/>
    <lineage>
        <taxon>Eukaryota</taxon>
        <taxon>Metamonada</taxon>
        <taxon>Diplomonadida</taxon>
        <taxon>Hexamitidae</taxon>
        <taxon>Giardiinae</taxon>
        <taxon>Giardia</taxon>
    </lineage>
</organism>
<comment type="function">
    <text evidence="1">DNA-dependent RNA polymerase catalyzes the transcription of DNA into RNA using the four ribonucleoside triphosphates as substrates. Largest and catalytic core component of RNA polymerase III which synthesizes small RNAs, such as 5S rRNA and tRNAs. Forms the polymerase active center together with the second largest subunit. A single-stranded DNA template strand of the promoter is positioned within the central active site cleft of Pol III. A bridging helix emanates from RPC1 and crosses the cleft near the catalytic site and is thought to promote translocation of Pol III by acting as a ratchet that moves the RNA-DNA hybrid through the active site by switching from straight to bent conformations at each step of nucleotide addition (By similarity).</text>
</comment>
<comment type="catalytic activity">
    <reaction>
        <text>RNA(n) + a ribonucleoside 5'-triphosphate = RNA(n+1) + diphosphate</text>
        <dbReference type="Rhea" id="RHEA:21248"/>
        <dbReference type="Rhea" id="RHEA-COMP:14527"/>
        <dbReference type="Rhea" id="RHEA-COMP:17342"/>
        <dbReference type="ChEBI" id="CHEBI:33019"/>
        <dbReference type="ChEBI" id="CHEBI:61557"/>
        <dbReference type="ChEBI" id="CHEBI:140395"/>
        <dbReference type="EC" id="2.7.7.6"/>
    </reaction>
</comment>
<comment type="subunit">
    <text evidence="1">Component of the RNA polymerase III (Pol III) complex consisting of 17 subunits.</text>
</comment>
<comment type="subcellular location">
    <subcellularLocation>
        <location evidence="1">Nucleus</location>
    </subcellularLocation>
</comment>
<comment type="similarity">
    <text evidence="3">Belongs to the RNA polymerase beta' chain family.</text>
</comment>
<sequence length="1741" mass="193929">MEPNRRLRYFRSEIPQPVTEHRFPKRVEKLVFSVLSSNALMKLSEVQITTPILYEHYPSPATNGVLDKRLGLSDKVGKCATCGKDTKMCIGHFGTISLALPVFHPGLINDARTMLSIVCPFCSRVKISEADRLKYKVLNHKFSLAIVKEAQEQAKKQVNCPFCHAPSTICKKSQGFRVLREMHYEERATKILADVIKHQKDIEKIQELDQRLRNHVVDPIQALHILQKVPECDYPYLGIPWQSRNVYASQQTPDSIASNDASQLFSRGSSKLLARTASRFIAQHQGISDRATRLTSHAFLTRPQDVILTHIPVPPSCLRPSVQSGSGAGTTEDNLTSHLVRILTINDKLKEAMVSGAVATSKVYAKWDQLNMDVSLLYIGKIPGGVQPVKNKTDSGTKEGTGIIDRLKGKAGRFRSNLSGKRVNFSGRTVISPNPYLSMQQVAIPRLIAQNLTFPEIVTSRNIRFLRELILNGKTYPGANEVLLLNDTIRYNPALKRLGIDVKQSRDMEAKAMELVSRCVDTFNLNSLCADLPELQAAIQHLVSESSNAINSELKAEDLPQNQPLFAKEVYDPAQKGESNNIDNNVCEIDELKLEDTADYQVGESAGQASTVAVEQPPESRTVLKLNSIASLQLTNASSQHLSTFKLNTVSLLQKDRRGRQAIANSLRPNDIVYRHLLPNDTLLFNRQPSLHRMSIMQFNAVIHENRTFSFNPVVCSPFNADFDGDEMNIFYMQGQEARAEAGILMGSHENIISPRHGECMIGLTQDFLTGIYLLSGKGIFMTRQEYCQHVSYGCDGFGDATYGVSLYNYGREFIKSIHDRRGTEEDTVGFVKVPCLSQPCIVYPRQLYSGKQVLSVLMKGNDFDSVNINLEHGDKTYKKDSDRRALSVNDDYIIIQNSEHLVGRLTKTFLASSKNCIFYFLVQNYGPVSAARIMLRFAKVAARFLMNYGFTIGIDDVMPSQRVLGKKEVIVQEGYEKAQEKIRDYESGKLEAIPGSTVQETLEATLNQILSNVRESCAQIALKELHFTNKPLIMSLCGSKGSPINIAQMIIILGQQSFGGSRAPDDFYTRSTPYFYHYSKEPNAKGFILNSFYTGLLPFEFLAHARAGRDGVIDSACKTADTGYLQRRLVKCLEDLSVSYDFTVRNSKKSVVQFRFGHDGFDPIKLEVGTGQCFDLDTLLRHIILLNRSQDLAEGAFPVLLDRYKAEAELDVLLNKDFYGQEACLIERSNVTSYFQQSILPKLTTNTHIATTVAPALAASFLQTTLTKKDIDDFLRQVRRKYIRLNLEPGSPCGAVAAQSVGEPSTQMTLKSFHHAGLASMNITQGVPRLKEIVDGVVKISTPITTVELHVDVDKEELAATVTEKYLEKARMMKNIIECTYLGQISASIIECYSQSVCHIEVNLDMKIIADMGLAGIITVETVVASILHNDKAKKLVGQDQSSGSVSIHSATRFSVRPLTQSRDDLLFDIQSLKLLLPMIPVSGISTCSRAVINEYKEFCQGATSSAPLTKYNLLVEGIGLQNILNVSGIDFTRTLSNNIVEVANTLGIEAAVATISNEIKACMDSHGMAVDMRHIRLLADIMCFRGRVLGFTRFGLTKMKADSVIMLASFEKTGEHLFNAALGNKVDEANGVTESIILGKPMSMGTGSFSLLQAPYFDEKTGKTIEYQPKQTTRFLGEVLNKQYDEEVDAIVNAFWYDEKLYLTGAEAKAKLLRGRRHANKRSWSRGKERHASLKPKNR</sequence>
<evidence type="ECO:0000250" key="1"/>
<evidence type="ECO:0000256" key="2">
    <source>
        <dbReference type="SAM" id="MobiDB-lite"/>
    </source>
</evidence>
<evidence type="ECO:0000305" key="3"/>
<accession>P25202</accession>
<reference key="1">
    <citation type="journal article" date="1992" name="Nucleic Acids Res.">
        <title>Nucleotide sequence of the gene encoding the largest subunit of the DNA-dependent RNA polymerase III of Giardia lamblia.</title>
        <authorList>
            <person name="Lanzendoerfer M."/>
            <person name="Palm P."/>
            <person name="Grampp B."/>
            <person name="Peattie D.A."/>
            <person name="Zillig W."/>
        </authorList>
    </citation>
    <scope>NUCLEOTIDE SEQUENCE [GENOMIC DNA]</scope>
    <source>
        <strain>SSP. P1</strain>
    </source>
</reference>
<proteinExistence type="inferred from homology"/>
<protein>
    <recommendedName>
        <fullName>DNA-directed RNA polymerase III subunit RPC1</fullName>
        <shortName>RNA polymerase III subunit C1</shortName>
        <ecNumber>2.7.7.6</ecNumber>
    </recommendedName>
    <alternativeName>
        <fullName>DNA-directed RNA polymerase III largest subunit</fullName>
    </alternativeName>
    <alternativeName>
        <fullName>RNA polymerase III subunit C160</fullName>
    </alternativeName>
</protein>
<name>RPC1_GIAIN</name>
<keyword id="KW-0240">DNA-directed RNA polymerase</keyword>
<keyword id="KW-0460">Magnesium</keyword>
<keyword id="KW-0479">Metal-binding</keyword>
<keyword id="KW-0548">Nucleotidyltransferase</keyword>
<keyword id="KW-0539">Nucleus</keyword>
<keyword id="KW-0804">Transcription</keyword>
<keyword id="KW-0808">Transferase</keyword>
<keyword id="KW-0862">Zinc</keyword>
<gene>
    <name type="primary">RPOA3</name>
</gene>
<dbReference type="EC" id="2.7.7.6"/>
<dbReference type="EMBL" id="X60325">
    <property type="protein sequence ID" value="CAA42895.1"/>
    <property type="molecule type" value="Genomic_DNA"/>
</dbReference>
<dbReference type="PIR" id="S22812">
    <property type="entry name" value="S22812"/>
</dbReference>
<dbReference type="RefSeq" id="XP_001709578.1">
    <property type="nucleotide sequence ID" value="XM_001709526.1"/>
</dbReference>
<dbReference type="SMR" id="P25202"/>
<dbReference type="KEGG" id="gla:GL50803_0016223"/>
<dbReference type="VEuPathDB" id="GiardiaDB:DHA2_16223"/>
<dbReference type="VEuPathDB" id="GiardiaDB:GL50581_540"/>
<dbReference type="VEuPathDB" id="GiardiaDB:GL50803_0016223"/>
<dbReference type="VEuPathDB" id="GiardiaDB:QR46_4079"/>
<dbReference type="eggNOG" id="KOG0261">
    <property type="taxonomic scope" value="Eukaryota"/>
</dbReference>
<dbReference type="OrthoDB" id="270392at2759"/>
<dbReference type="GO" id="GO:0000428">
    <property type="term" value="C:DNA-directed RNA polymerase complex"/>
    <property type="evidence" value="ECO:0007669"/>
    <property type="project" value="UniProtKB-KW"/>
</dbReference>
<dbReference type="GO" id="GO:0005739">
    <property type="term" value="C:mitochondrion"/>
    <property type="evidence" value="ECO:0007669"/>
    <property type="project" value="GOC"/>
</dbReference>
<dbReference type="GO" id="GO:0005634">
    <property type="term" value="C:nucleus"/>
    <property type="evidence" value="ECO:0007669"/>
    <property type="project" value="UniProtKB-SubCell"/>
</dbReference>
<dbReference type="GO" id="GO:0009536">
    <property type="term" value="C:plastid"/>
    <property type="evidence" value="ECO:0007669"/>
    <property type="project" value="GOC"/>
</dbReference>
<dbReference type="GO" id="GO:0003677">
    <property type="term" value="F:DNA binding"/>
    <property type="evidence" value="ECO:0007669"/>
    <property type="project" value="InterPro"/>
</dbReference>
<dbReference type="GO" id="GO:0003899">
    <property type="term" value="F:DNA-directed RNA polymerase activity"/>
    <property type="evidence" value="ECO:0007669"/>
    <property type="project" value="UniProtKB-EC"/>
</dbReference>
<dbReference type="GO" id="GO:0046872">
    <property type="term" value="F:metal ion binding"/>
    <property type="evidence" value="ECO:0007669"/>
    <property type="project" value="UniProtKB-KW"/>
</dbReference>
<dbReference type="GO" id="GO:0006351">
    <property type="term" value="P:DNA-templated transcription"/>
    <property type="evidence" value="ECO:0007669"/>
    <property type="project" value="InterPro"/>
</dbReference>
<dbReference type="CDD" id="cd02736">
    <property type="entry name" value="RNAP_III_Rpc1_C"/>
    <property type="match status" value="1"/>
</dbReference>
<dbReference type="FunFam" id="2.40.40.20:FF:000019">
    <property type="entry name" value="DNA-directed RNA polymerase II subunit RPB1"/>
    <property type="match status" value="1"/>
</dbReference>
<dbReference type="FunFam" id="1.10.150.390:FF:000004">
    <property type="entry name" value="DNA-directed RNA polymerase subunit"/>
    <property type="match status" value="1"/>
</dbReference>
<dbReference type="FunFam" id="1.10.274.100:FF:000024">
    <property type="entry name" value="DNA-directed RNA polymerase subunit"/>
    <property type="match status" value="1"/>
</dbReference>
<dbReference type="Gene3D" id="1.10.132.30">
    <property type="match status" value="1"/>
</dbReference>
<dbReference type="Gene3D" id="1.10.150.390">
    <property type="match status" value="1"/>
</dbReference>
<dbReference type="Gene3D" id="2.40.40.20">
    <property type="match status" value="2"/>
</dbReference>
<dbReference type="Gene3D" id="6.10.250.2940">
    <property type="match status" value="1"/>
</dbReference>
<dbReference type="Gene3D" id="6.20.50.80">
    <property type="match status" value="1"/>
</dbReference>
<dbReference type="Gene3D" id="3.30.1490.180">
    <property type="entry name" value="RNA polymerase ii"/>
    <property type="match status" value="2"/>
</dbReference>
<dbReference type="Gene3D" id="4.10.860.120">
    <property type="entry name" value="RNA polymerase II, clamp domain"/>
    <property type="match status" value="1"/>
</dbReference>
<dbReference type="Gene3D" id="1.10.274.100">
    <property type="entry name" value="RNA polymerase Rpb1, domain 3"/>
    <property type="match status" value="1"/>
</dbReference>
<dbReference type="InterPro" id="IPR045867">
    <property type="entry name" value="DNA-dir_RpoC_beta_prime"/>
</dbReference>
<dbReference type="InterPro" id="IPR000722">
    <property type="entry name" value="RNA_pol_asu"/>
</dbReference>
<dbReference type="InterPro" id="IPR006592">
    <property type="entry name" value="RNA_pol_N"/>
</dbReference>
<dbReference type="InterPro" id="IPR007080">
    <property type="entry name" value="RNA_pol_Rpb1_1"/>
</dbReference>
<dbReference type="InterPro" id="IPR007066">
    <property type="entry name" value="RNA_pol_Rpb1_3"/>
</dbReference>
<dbReference type="InterPro" id="IPR042102">
    <property type="entry name" value="RNA_pol_Rpb1_3_sf"/>
</dbReference>
<dbReference type="InterPro" id="IPR007083">
    <property type="entry name" value="RNA_pol_Rpb1_4"/>
</dbReference>
<dbReference type="InterPro" id="IPR007081">
    <property type="entry name" value="RNA_pol_Rpb1_5"/>
</dbReference>
<dbReference type="InterPro" id="IPR044893">
    <property type="entry name" value="RNA_pol_Rpb1_clamp_domain"/>
</dbReference>
<dbReference type="InterPro" id="IPR035698">
    <property type="entry name" value="RNAP_III_Rpc1_C"/>
</dbReference>
<dbReference type="InterPro" id="IPR038120">
    <property type="entry name" value="Rpb1_funnel_sf"/>
</dbReference>
<dbReference type="PANTHER" id="PTHR19376">
    <property type="entry name" value="DNA-DIRECTED RNA POLYMERASE"/>
    <property type="match status" value="1"/>
</dbReference>
<dbReference type="PANTHER" id="PTHR19376:SF32">
    <property type="entry name" value="DNA-DIRECTED RNA POLYMERASE III SUBUNIT RPC1"/>
    <property type="match status" value="1"/>
</dbReference>
<dbReference type="Pfam" id="PF04997">
    <property type="entry name" value="RNA_pol_Rpb1_1"/>
    <property type="match status" value="2"/>
</dbReference>
<dbReference type="Pfam" id="PF00623">
    <property type="entry name" value="RNA_pol_Rpb1_2"/>
    <property type="match status" value="2"/>
</dbReference>
<dbReference type="Pfam" id="PF04983">
    <property type="entry name" value="RNA_pol_Rpb1_3"/>
    <property type="match status" value="1"/>
</dbReference>
<dbReference type="Pfam" id="PF05000">
    <property type="entry name" value="RNA_pol_Rpb1_4"/>
    <property type="match status" value="1"/>
</dbReference>
<dbReference type="Pfam" id="PF04998">
    <property type="entry name" value="RNA_pol_Rpb1_5"/>
    <property type="match status" value="1"/>
</dbReference>
<dbReference type="SMART" id="SM00663">
    <property type="entry name" value="RPOLA_N"/>
    <property type="match status" value="1"/>
</dbReference>
<dbReference type="SUPFAM" id="SSF64484">
    <property type="entry name" value="beta and beta-prime subunits of DNA dependent RNA-polymerase"/>
    <property type="match status" value="1"/>
</dbReference>
<feature type="chain" id="PRO_0000073948" description="DNA-directed RNA polymerase III subunit RPC1">
    <location>
        <begin position="1"/>
        <end position="1741"/>
    </location>
</feature>
<feature type="region of interest" description="Bridging helix" evidence="1">
    <location>
        <begin position="1099"/>
        <end position="1111"/>
    </location>
</feature>
<feature type="region of interest" description="Disordered" evidence="2">
    <location>
        <begin position="1719"/>
        <end position="1741"/>
    </location>
</feature>
<feature type="binding site" evidence="1">
    <location>
        <position position="79"/>
    </location>
    <ligand>
        <name>Zn(2+)</name>
        <dbReference type="ChEBI" id="CHEBI:29105"/>
        <label>1</label>
    </ligand>
</feature>
<feature type="binding site" evidence="1">
    <location>
        <position position="82"/>
    </location>
    <ligand>
        <name>Zn(2+)</name>
        <dbReference type="ChEBI" id="CHEBI:29105"/>
        <label>1</label>
    </ligand>
</feature>
<feature type="binding site" evidence="1">
    <location>
        <position position="89"/>
    </location>
    <ligand>
        <name>Zn(2+)</name>
        <dbReference type="ChEBI" id="CHEBI:29105"/>
        <label>1</label>
    </ligand>
</feature>
<feature type="binding site" evidence="1">
    <location>
        <position position="92"/>
    </location>
    <ligand>
        <name>Zn(2+)</name>
        <dbReference type="ChEBI" id="CHEBI:29105"/>
        <label>1</label>
    </ligand>
</feature>
<feature type="binding site" evidence="1">
    <location>
        <position position="119"/>
    </location>
    <ligand>
        <name>Zn(2+)</name>
        <dbReference type="ChEBI" id="CHEBI:29105"/>
        <label>2</label>
    </ligand>
</feature>
<feature type="binding site" evidence="1">
    <location>
        <position position="122"/>
    </location>
    <ligand>
        <name>Zn(2+)</name>
        <dbReference type="ChEBI" id="CHEBI:29105"/>
        <label>2</label>
    </ligand>
</feature>
<feature type="binding site" evidence="1">
    <location>
        <position position="160"/>
    </location>
    <ligand>
        <name>Zn(2+)</name>
        <dbReference type="ChEBI" id="CHEBI:29105"/>
        <label>2</label>
    </ligand>
</feature>
<feature type="binding site" evidence="1">
    <location>
        <position position="722"/>
    </location>
    <ligand>
        <name>Mg(2+)</name>
        <dbReference type="ChEBI" id="CHEBI:18420"/>
        <note>catalytic</note>
    </ligand>
</feature>
<feature type="binding site" evidence="1">
    <location>
        <position position="724"/>
    </location>
    <ligand>
        <name>Mg(2+)</name>
        <dbReference type="ChEBI" id="CHEBI:18420"/>
        <note>catalytic</note>
    </ligand>
</feature>
<feature type="binding site" evidence="1">
    <location>
        <position position="726"/>
    </location>
    <ligand>
        <name>Mg(2+)</name>
        <dbReference type="ChEBI" id="CHEBI:18420"/>
        <note>catalytic</note>
    </ligand>
</feature>